<name>AROA_ALIFM</name>
<reference key="1">
    <citation type="submission" date="2008-08" db="EMBL/GenBank/DDBJ databases">
        <title>Complete sequence of Vibrio fischeri strain MJ11.</title>
        <authorList>
            <person name="Mandel M.J."/>
            <person name="Stabb E.V."/>
            <person name="Ruby E.G."/>
            <person name="Ferriera S."/>
            <person name="Johnson J."/>
            <person name="Kravitz S."/>
            <person name="Beeson K."/>
            <person name="Sutton G."/>
            <person name="Rogers Y.-H."/>
            <person name="Friedman R."/>
            <person name="Frazier M."/>
            <person name="Venter J.C."/>
        </authorList>
    </citation>
    <scope>NUCLEOTIDE SEQUENCE [LARGE SCALE GENOMIC DNA]</scope>
    <source>
        <strain>MJ11</strain>
    </source>
</reference>
<gene>
    <name evidence="1" type="primary">aroA</name>
    <name type="ordered locus">VFMJ11_1888</name>
</gene>
<comment type="function">
    <text evidence="1">Catalyzes the transfer of the enolpyruvyl moiety of phosphoenolpyruvate (PEP) to the 5-hydroxyl of shikimate-3-phosphate (S3P) to produce enolpyruvyl shikimate-3-phosphate and inorganic phosphate.</text>
</comment>
<comment type="catalytic activity">
    <reaction evidence="1">
        <text>3-phosphoshikimate + phosphoenolpyruvate = 5-O-(1-carboxyvinyl)-3-phosphoshikimate + phosphate</text>
        <dbReference type="Rhea" id="RHEA:21256"/>
        <dbReference type="ChEBI" id="CHEBI:43474"/>
        <dbReference type="ChEBI" id="CHEBI:57701"/>
        <dbReference type="ChEBI" id="CHEBI:58702"/>
        <dbReference type="ChEBI" id="CHEBI:145989"/>
        <dbReference type="EC" id="2.5.1.19"/>
    </reaction>
    <physiologicalReaction direction="left-to-right" evidence="1">
        <dbReference type="Rhea" id="RHEA:21257"/>
    </physiologicalReaction>
</comment>
<comment type="pathway">
    <text evidence="1">Metabolic intermediate biosynthesis; chorismate biosynthesis; chorismate from D-erythrose 4-phosphate and phosphoenolpyruvate: step 6/7.</text>
</comment>
<comment type="subunit">
    <text evidence="1">Monomer.</text>
</comment>
<comment type="subcellular location">
    <subcellularLocation>
        <location evidence="1">Cytoplasm</location>
    </subcellularLocation>
</comment>
<comment type="similarity">
    <text evidence="1">Belongs to the EPSP synthase family.</text>
</comment>
<accession>B5FG60</accession>
<organism>
    <name type="scientific">Aliivibrio fischeri (strain MJ11)</name>
    <name type="common">Vibrio fischeri</name>
    <dbReference type="NCBI Taxonomy" id="388396"/>
    <lineage>
        <taxon>Bacteria</taxon>
        <taxon>Pseudomonadati</taxon>
        <taxon>Pseudomonadota</taxon>
        <taxon>Gammaproteobacteria</taxon>
        <taxon>Vibrionales</taxon>
        <taxon>Vibrionaceae</taxon>
        <taxon>Aliivibrio</taxon>
    </lineage>
</organism>
<keyword id="KW-0028">Amino-acid biosynthesis</keyword>
<keyword id="KW-0057">Aromatic amino acid biosynthesis</keyword>
<keyword id="KW-0963">Cytoplasm</keyword>
<keyword id="KW-0808">Transferase</keyword>
<dbReference type="EC" id="2.5.1.19" evidence="1"/>
<dbReference type="EMBL" id="CP001139">
    <property type="protein sequence ID" value="ACH66919.1"/>
    <property type="molecule type" value="Genomic_DNA"/>
</dbReference>
<dbReference type="RefSeq" id="WP_012534070.1">
    <property type="nucleotide sequence ID" value="NC_011184.1"/>
</dbReference>
<dbReference type="SMR" id="B5FG60"/>
<dbReference type="KEGG" id="vfm:VFMJ11_1888"/>
<dbReference type="HOGENOM" id="CLU_024321_0_0_6"/>
<dbReference type="UniPathway" id="UPA00053">
    <property type="reaction ID" value="UER00089"/>
</dbReference>
<dbReference type="Proteomes" id="UP000001857">
    <property type="component" value="Chromosome I"/>
</dbReference>
<dbReference type="GO" id="GO:0005737">
    <property type="term" value="C:cytoplasm"/>
    <property type="evidence" value="ECO:0007669"/>
    <property type="project" value="UniProtKB-SubCell"/>
</dbReference>
<dbReference type="GO" id="GO:0003866">
    <property type="term" value="F:3-phosphoshikimate 1-carboxyvinyltransferase activity"/>
    <property type="evidence" value="ECO:0007669"/>
    <property type="project" value="UniProtKB-UniRule"/>
</dbReference>
<dbReference type="GO" id="GO:0008652">
    <property type="term" value="P:amino acid biosynthetic process"/>
    <property type="evidence" value="ECO:0007669"/>
    <property type="project" value="UniProtKB-KW"/>
</dbReference>
<dbReference type="GO" id="GO:0009073">
    <property type="term" value="P:aromatic amino acid family biosynthetic process"/>
    <property type="evidence" value="ECO:0007669"/>
    <property type="project" value="UniProtKB-KW"/>
</dbReference>
<dbReference type="GO" id="GO:0009423">
    <property type="term" value="P:chorismate biosynthetic process"/>
    <property type="evidence" value="ECO:0007669"/>
    <property type="project" value="UniProtKB-UniRule"/>
</dbReference>
<dbReference type="CDD" id="cd01556">
    <property type="entry name" value="EPSP_synthase"/>
    <property type="match status" value="1"/>
</dbReference>
<dbReference type="FunFam" id="3.65.10.10:FF:000003">
    <property type="entry name" value="3-phosphoshikimate 1-carboxyvinyltransferase"/>
    <property type="match status" value="1"/>
</dbReference>
<dbReference type="FunFam" id="3.65.10.10:FF:000004">
    <property type="entry name" value="3-phosphoshikimate 1-carboxyvinyltransferase"/>
    <property type="match status" value="1"/>
</dbReference>
<dbReference type="Gene3D" id="3.65.10.10">
    <property type="entry name" value="Enolpyruvate transferase domain"/>
    <property type="match status" value="2"/>
</dbReference>
<dbReference type="HAMAP" id="MF_00210">
    <property type="entry name" value="EPSP_synth"/>
    <property type="match status" value="1"/>
</dbReference>
<dbReference type="InterPro" id="IPR001986">
    <property type="entry name" value="Enolpyruvate_Tfrase_dom"/>
</dbReference>
<dbReference type="InterPro" id="IPR036968">
    <property type="entry name" value="Enolpyruvate_Tfrase_sf"/>
</dbReference>
<dbReference type="InterPro" id="IPR006264">
    <property type="entry name" value="EPSP_synthase"/>
</dbReference>
<dbReference type="InterPro" id="IPR023193">
    <property type="entry name" value="EPSP_synthase_CS"/>
</dbReference>
<dbReference type="InterPro" id="IPR013792">
    <property type="entry name" value="RNA3'P_cycl/enolpyr_Trfase_a/b"/>
</dbReference>
<dbReference type="NCBIfam" id="TIGR01356">
    <property type="entry name" value="aroA"/>
    <property type="match status" value="1"/>
</dbReference>
<dbReference type="PANTHER" id="PTHR21090">
    <property type="entry name" value="AROM/DEHYDROQUINATE SYNTHASE"/>
    <property type="match status" value="1"/>
</dbReference>
<dbReference type="PANTHER" id="PTHR21090:SF5">
    <property type="entry name" value="PENTAFUNCTIONAL AROM POLYPEPTIDE"/>
    <property type="match status" value="1"/>
</dbReference>
<dbReference type="Pfam" id="PF00275">
    <property type="entry name" value="EPSP_synthase"/>
    <property type="match status" value="1"/>
</dbReference>
<dbReference type="PIRSF" id="PIRSF000505">
    <property type="entry name" value="EPSPS"/>
    <property type="match status" value="1"/>
</dbReference>
<dbReference type="SUPFAM" id="SSF55205">
    <property type="entry name" value="EPT/RTPC-like"/>
    <property type="match status" value="1"/>
</dbReference>
<dbReference type="PROSITE" id="PS00104">
    <property type="entry name" value="EPSP_SYNTHASE_1"/>
    <property type="match status" value="1"/>
</dbReference>
<dbReference type="PROSITE" id="PS00885">
    <property type="entry name" value="EPSP_SYNTHASE_2"/>
    <property type="match status" value="1"/>
</dbReference>
<evidence type="ECO:0000255" key="1">
    <source>
        <dbReference type="HAMAP-Rule" id="MF_00210"/>
    </source>
</evidence>
<protein>
    <recommendedName>
        <fullName evidence="1">3-phosphoshikimate 1-carboxyvinyltransferase</fullName>
        <ecNumber evidence="1">2.5.1.19</ecNumber>
    </recommendedName>
    <alternativeName>
        <fullName evidence="1">5-enolpyruvylshikimate-3-phosphate synthase</fullName>
        <shortName evidence="1">EPSP synthase</shortName>
        <shortName evidence="1">EPSPS</shortName>
    </alternativeName>
</protein>
<sequence length="426" mass="45645">MESLTLQPISKIDGQINLPGSKSVSNRALLLAALASGTTKLTNLLDSDDIRHMLNALKALGVEYKLSADKTECEVTGLGRAFEPNEALELFLGNAGTAMRPLAAALCLGQGEFVLTGEPRMKERPIGHLVTALKAAGADVEYLENENYPPLKIKGTGLHGGTVEIDGSISSQFLTAFLMAAPLSTQETTIKIVGDLVSKPYIDITLDIMATFGVKIENQNYQTFVVPANQTYVAPGDFLVEGDASSASYFLAAAAIKGGEVKVTGIGKKSIQGDVQFADALAAMGTEIEWGDDYVIARKGELNAIDMDFNHIPDAAMTIATAALFAKGTTSIRNVYNWRVKETDRLAAMATELRKVGAVVEEGEDYITITPPASLQHASIDTYDDHRMAMCFSLVALSDTPVTINDPGCTSKTFPDYFDKLKELSC</sequence>
<feature type="chain" id="PRO_1000099765" description="3-phosphoshikimate 1-carboxyvinyltransferase">
    <location>
        <begin position="1"/>
        <end position="426"/>
    </location>
</feature>
<feature type="active site" description="Proton acceptor" evidence="1">
    <location>
        <position position="314"/>
    </location>
</feature>
<feature type="binding site" evidence="1">
    <location>
        <position position="22"/>
    </location>
    <ligand>
        <name>3-phosphoshikimate</name>
        <dbReference type="ChEBI" id="CHEBI:145989"/>
    </ligand>
</feature>
<feature type="binding site" evidence="1">
    <location>
        <position position="22"/>
    </location>
    <ligand>
        <name>phosphoenolpyruvate</name>
        <dbReference type="ChEBI" id="CHEBI:58702"/>
    </ligand>
</feature>
<feature type="binding site" evidence="1">
    <location>
        <position position="23"/>
    </location>
    <ligand>
        <name>3-phosphoshikimate</name>
        <dbReference type="ChEBI" id="CHEBI:145989"/>
    </ligand>
</feature>
<feature type="binding site" evidence="1">
    <location>
        <position position="27"/>
    </location>
    <ligand>
        <name>3-phosphoshikimate</name>
        <dbReference type="ChEBI" id="CHEBI:145989"/>
    </ligand>
</feature>
<feature type="binding site" evidence="1">
    <location>
        <position position="96"/>
    </location>
    <ligand>
        <name>phosphoenolpyruvate</name>
        <dbReference type="ChEBI" id="CHEBI:58702"/>
    </ligand>
</feature>
<feature type="binding site" evidence="1">
    <location>
        <position position="124"/>
    </location>
    <ligand>
        <name>phosphoenolpyruvate</name>
        <dbReference type="ChEBI" id="CHEBI:58702"/>
    </ligand>
</feature>
<feature type="binding site" evidence="1">
    <location>
        <position position="170"/>
    </location>
    <ligand>
        <name>3-phosphoshikimate</name>
        <dbReference type="ChEBI" id="CHEBI:145989"/>
    </ligand>
</feature>
<feature type="binding site" evidence="1">
    <location>
        <position position="171"/>
    </location>
    <ligand>
        <name>3-phosphoshikimate</name>
        <dbReference type="ChEBI" id="CHEBI:145989"/>
    </ligand>
</feature>
<feature type="binding site" evidence="1">
    <location>
        <position position="172"/>
    </location>
    <ligand>
        <name>3-phosphoshikimate</name>
        <dbReference type="ChEBI" id="CHEBI:145989"/>
    </ligand>
</feature>
<feature type="binding site" evidence="1">
    <location>
        <position position="172"/>
    </location>
    <ligand>
        <name>phosphoenolpyruvate</name>
        <dbReference type="ChEBI" id="CHEBI:58702"/>
    </ligand>
</feature>
<feature type="binding site" evidence="1">
    <location>
        <position position="198"/>
    </location>
    <ligand>
        <name>3-phosphoshikimate</name>
        <dbReference type="ChEBI" id="CHEBI:145989"/>
    </ligand>
</feature>
<feature type="binding site" evidence="1">
    <location>
        <position position="314"/>
    </location>
    <ligand>
        <name>3-phosphoshikimate</name>
        <dbReference type="ChEBI" id="CHEBI:145989"/>
    </ligand>
</feature>
<feature type="binding site" evidence="1">
    <location>
        <position position="337"/>
    </location>
    <ligand>
        <name>3-phosphoshikimate</name>
        <dbReference type="ChEBI" id="CHEBI:145989"/>
    </ligand>
</feature>
<feature type="binding site" evidence="1">
    <location>
        <position position="341"/>
    </location>
    <ligand>
        <name>3-phosphoshikimate</name>
        <dbReference type="ChEBI" id="CHEBI:145989"/>
    </ligand>
</feature>
<feature type="binding site" evidence="1">
    <location>
        <position position="345"/>
    </location>
    <ligand>
        <name>phosphoenolpyruvate</name>
        <dbReference type="ChEBI" id="CHEBI:58702"/>
    </ligand>
</feature>
<feature type="binding site" evidence="1">
    <location>
        <position position="387"/>
    </location>
    <ligand>
        <name>phosphoenolpyruvate</name>
        <dbReference type="ChEBI" id="CHEBI:58702"/>
    </ligand>
</feature>
<feature type="binding site" evidence="1">
    <location>
        <position position="412"/>
    </location>
    <ligand>
        <name>phosphoenolpyruvate</name>
        <dbReference type="ChEBI" id="CHEBI:58702"/>
    </ligand>
</feature>
<proteinExistence type="inferred from homology"/>